<keyword id="KW-0028">Amino-acid biosynthesis</keyword>
<keyword id="KW-0057">Aromatic amino acid biosynthesis</keyword>
<keyword id="KW-0067">ATP-binding</keyword>
<keyword id="KW-0963">Cytoplasm</keyword>
<keyword id="KW-0418">Kinase</keyword>
<keyword id="KW-0460">Magnesium</keyword>
<keyword id="KW-0479">Metal-binding</keyword>
<keyword id="KW-0547">Nucleotide-binding</keyword>
<keyword id="KW-1185">Reference proteome</keyword>
<keyword id="KW-0808">Transferase</keyword>
<organism>
    <name type="scientific">Escherichia coli (strain 55989 / EAEC)</name>
    <dbReference type="NCBI Taxonomy" id="585055"/>
    <lineage>
        <taxon>Bacteria</taxon>
        <taxon>Pseudomonadati</taxon>
        <taxon>Pseudomonadota</taxon>
        <taxon>Gammaproteobacteria</taxon>
        <taxon>Enterobacterales</taxon>
        <taxon>Enterobacteriaceae</taxon>
        <taxon>Escherichia</taxon>
    </lineage>
</organism>
<reference key="1">
    <citation type="journal article" date="2009" name="PLoS Genet.">
        <title>Organised genome dynamics in the Escherichia coli species results in highly diverse adaptive paths.</title>
        <authorList>
            <person name="Touchon M."/>
            <person name="Hoede C."/>
            <person name="Tenaillon O."/>
            <person name="Barbe V."/>
            <person name="Baeriswyl S."/>
            <person name="Bidet P."/>
            <person name="Bingen E."/>
            <person name="Bonacorsi S."/>
            <person name="Bouchier C."/>
            <person name="Bouvet O."/>
            <person name="Calteau A."/>
            <person name="Chiapello H."/>
            <person name="Clermont O."/>
            <person name="Cruveiller S."/>
            <person name="Danchin A."/>
            <person name="Diard M."/>
            <person name="Dossat C."/>
            <person name="Karoui M.E."/>
            <person name="Frapy E."/>
            <person name="Garry L."/>
            <person name="Ghigo J.M."/>
            <person name="Gilles A.M."/>
            <person name="Johnson J."/>
            <person name="Le Bouguenec C."/>
            <person name="Lescat M."/>
            <person name="Mangenot S."/>
            <person name="Martinez-Jehanne V."/>
            <person name="Matic I."/>
            <person name="Nassif X."/>
            <person name="Oztas S."/>
            <person name="Petit M.A."/>
            <person name="Pichon C."/>
            <person name="Rouy Z."/>
            <person name="Ruf C.S."/>
            <person name="Schneider D."/>
            <person name="Tourret J."/>
            <person name="Vacherie B."/>
            <person name="Vallenet D."/>
            <person name="Medigue C."/>
            <person name="Rocha E.P.C."/>
            <person name="Denamur E."/>
        </authorList>
    </citation>
    <scope>NUCLEOTIDE SEQUENCE [LARGE SCALE GENOMIC DNA]</scope>
    <source>
        <strain>55989 / EAEC</strain>
    </source>
</reference>
<protein>
    <recommendedName>
        <fullName evidence="1">Shikimate kinase 2</fullName>
        <shortName evidence="1">SK 2</shortName>
        <ecNumber evidence="1">2.7.1.71</ecNumber>
    </recommendedName>
</protein>
<sequence>MTQPLFLIGPRGCGKTTVGMALADSLNRRFVDTDQWLQSQLNMTVAEIVEREEWAGFRARETAALEAVTAPSTVIATGGGIILTEFNRHFMQNNGIVVYLCAPVSVLVNRLQAAPEEDLRPTLTGKPLSEEVQEVLEERDALYREVAHIIIDATNEPSQVISEIRSALAQTINC</sequence>
<name>AROL_ECO55</name>
<dbReference type="EC" id="2.7.1.71" evidence="1"/>
<dbReference type="EMBL" id="CU928145">
    <property type="protein sequence ID" value="CAU96271.1"/>
    <property type="molecule type" value="Genomic_DNA"/>
</dbReference>
<dbReference type="RefSeq" id="WP_000193393.1">
    <property type="nucleotide sequence ID" value="NZ_CP028304.1"/>
</dbReference>
<dbReference type="SMR" id="B7L543"/>
<dbReference type="GeneID" id="93777073"/>
<dbReference type="KEGG" id="eck:EC55989_0397"/>
<dbReference type="HOGENOM" id="CLU_057607_4_3_6"/>
<dbReference type="UniPathway" id="UPA00053">
    <property type="reaction ID" value="UER00088"/>
</dbReference>
<dbReference type="Proteomes" id="UP000000746">
    <property type="component" value="Chromosome"/>
</dbReference>
<dbReference type="GO" id="GO:0005829">
    <property type="term" value="C:cytosol"/>
    <property type="evidence" value="ECO:0007669"/>
    <property type="project" value="TreeGrafter"/>
</dbReference>
<dbReference type="GO" id="GO:0005524">
    <property type="term" value="F:ATP binding"/>
    <property type="evidence" value="ECO:0007669"/>
    <property type="project" value="UniProtKB-UniRule"/>
</dbReference>
<dbReference type="GO" id="GO:0000287">
    <property type="term" value="F:magnesium ion binding"/>
    <property type="evidence" value="ECO:0007669"/>
    <property type="project" value="UniProtKB-UniRule"/>
</dbReference>
<dbReference type="GO" id="GO:0004765">
    <property type="term" value="F:shikimate kinase activity"/>
    <property type="evidence" value="ECO:0007669"/>
    <property type="project" value="UniProtKB-UniRule"/>
</dbReference>
<dbReference type="GO" id="GO:0008652">
    <property type="term" value="P:amino acid biosynthetic process"/>
    <property type="evidence" value="ECO:0007669"/>
    <property type="project" value="UniProtKB-KW"/>
</dbReference>
<dbReference type="GO" id="GO:0009073">
    <property type="term" value="P:aromatic amino acid family biosynthetic process"/>
    <property type="evidence" value="ECO:0007669"/>
    <property type="project" value="UniProtKB-KW"/>
</dbReference>
<dbReference type="GO" id="GO:0009423">
    <property type="term" value="P:chorismate biosynthetic process"/>
    <property type="evidence" value="ECO:0007669"/>
    <property type="project" value="UniProtKB-UniRule"/>
</dbReference>
<dbReference type="CDD" id="cd00464">
    <property type="entry name" value="SK"/>
    <property type="match status" value="1"/>
</dbReference>
<dbReference type="FunFam" id="3.40.50.300:FF:000408">
    <property type="entry name" value="Shikimate kinase 2"/>
    <property type="match status" value="1"/>
</dbReference>
<dbReference type="Gene3D" id="3.40.50.300">
    <property type="entry name" value="P-loop containing nucleotide triphosphate hydrolases"/>
    <property type="match status" value="1"/>
</dbReference>
<dbReference type="HAMAP" id="MF_00109">
    <property type="entry name" value="Shikimate_kinase"/>
    <property type="match status" value="1"/>
</dbReference>
<dbReference type="HAMAP" id="MF_01269">
    <property type="entry name" value="Shikimate_kinase_2"/>
    <property type="match status" value="1"/>
</dbReference>
<dbReference type="InterPro" id="IPR027417">
    <property type="entry name" value="P-loop_NTPase"/>
</dbReference>
<dbReference type="InterPro" id="IPR031322">
    <property type="entry name" value="Shikimate/glucono_kinase"/>
</dbReference>
<dbReference type="InterPro" id="IPR000623">
    <property type="entry name" value="Shikimate_kinase/TSH1"/>
</dbReference>
<dbReference type="InterPro" id="IPR027544">
    <property type="entry name" value="Shikimate_kinase_2"/>
</dbReference>
<dbReference type="InterPro" id="IPR023000">
    <property type="entry name" value="Shikimate_kinase_CS"/>
</dbReference>
<dbReference type="NCBIfam" id="NF002988">
    <property type="entry name" value="PRK03731.1"/>
    <property type="match status" value="1"/>
</dbReference>
<dbReference type="PANTHER" id="PTHR21087">
    <property type="entry name" value="SHIKIMATE KINASE"/>
    <property type="match status" value="1"/>
</dbReference>
<dbReference type="PANTHER" id="PTHR21087:SF21">
    <property type="entry name" value="SHIKIMATE KINASE 2"/>
    <property type="match status" value="1"/>
</dbReference>
<dbReference type="Pfam" id="PF01202">
    <property type="entry name" value="SKI"/>
    <property type="match status" value="1"/>
</dbReference>
<dbReference type="PRINTS" id="PR01100">
    <property type="entry name" value="SHIKIMTKNASE"/>
</dbReference>
<dbReference type="SUPFAM" id="SSF52540">
    <property type="entry name" value="P-loop containing nucleoside triphosphate hydrolases"/>
    <property type="match status" value="1"/>
</dbReference>
<dbReference type="PROSITE" id="PS01128">
    <property type="entry name" value="SHIKIMATE_KINASE"/>
    <property type="match status" value="1"/>
</dbReference>
<gene>
    <name evidence="1" type="primary">aroL</name>
    <name type="ordered locus">EC55989_0397</name>
</gene>
<accession>B7L543</accession>
<evidence type="ECO:0000255" key="1">
    <source>
        <dbReference type="HAMAP-Rule" id="MF_01269"/>
    </source>
</evidence>
<feature type="chain" id="PRO_1000165145" description="Shikimate kinase 2">
    <location>
        <begin position="1"/>
        <end position="174"/>
    </location>
</feature>
<feature type="region of interest" description="LID domain">
    <location>
        <begin position="112"/>
        <end position="126"/>
    </location>
</feature>
<feature type="binding site" evidence="1">
    <location>
        <begin position="12"/>
        <end position="17"/>
    </location>
    <ligand>
        <name>ATP</name>
        <dbReference type="ChEBI" id="CHEBI:30616"/>
    </ligand>
</feature>
<feature type="binding site" evidence="1">
    <location>
        <position position="16"/>
    </location>
    <ligand>
        <name>Mg(2+)</name>
        <dbReference type="ChEBI" id="CHEBI:18420"/>
    </ligand>
</feature>
<feature type="binding site" evidence="1">
    <location>
        <position position="32"/>
    </location>
    <ligand>
        <name>Mg(2+)</name>
        <dbReference type="ChEBI" id="CHEBI:18420"/>
    </ligand>
</feature>
<feature type="binding site" evidence="1">
    <location>
        <position position="34"/>
    </location>
    <ligand>
        <name>substrate</name>
    </ligand>
</feature>
<feature type="binding site" evidence="1">
    <location>
        <position position="58"/>
    </location>
    <ligand>
        <name>substrate</name>
    </ligand>
</feature>
<feature type="binding site" evidence="1">
    <location>
        <position position="79"/>
    </location>
    <ligand>
        <name>substrate</name>
    </ligand>
</feature>
<feature type="binding site" evidence="1">
    <location>
        <position position="120"/>
    </location>
    <ligand>
        <name>ATP</name>
        <dbReference type="ChEBI" id="CHEBI:30616"/>
    </ligand>
</feature>
<feature type="binding site" evidence="1">
    <location>
        <position position="139"/>
    </location>
    <ligand>
        <name>substrate</name>
    </ligand>
</feature>
<comment type="function">
    <text evidence="1">Catalyzes the specific phosphorylation of the 3-hydroxyl group of shikimic acid using ATP as a cosubstrate.</text>
</comment>
<comment type="catalytic activity">
    <reaction evidence="1">
        <text>shikimate + ATP = 3-phosphoshikimate + ADP + H(+)</text>
        <dbReference type="Rhea" id="RHEA:13121"/>
        <dbReference type="ChEBI" id="CHEBI:15378"/>
        <dbReference type="ChEBI" id="CHEBI:30616"/>
        <dbReference type="ChEBI" id="CHEBI:36208"/>
        <dbReference type="ChEBI" id="CHEBI:145989"/>
        <dbReference type="ChEBI" id="CHEBI:456216"/>
        <dbReference type="EC" id="2.7.1.71"/>
    </reaction>
</comment>
<comment type="cofactor">
    <cofactor evidence="1">
        <name>Mg(2+)</name>
        <dbReference type="ChEBI" id="CHEBI:18420"/>
    </cofactor>
    <text evidence="1">Binds 1 Mg(2+) ion per subunit.</text>
</comment>
<comment type="pathway">
    <text evidence="1">Metabolic intermediate biosynthesis; chorismate biosynthesis; chorismate from D-erythrose 4-phosphate and phosphoenolpyruvate: step 5/7.</text>
</comment>
<comment type="subunit">
    <text evidence="1">Monomer.</text>
</comment>
<comment type="subcellular location">
    <subcellularLocation>
        <location evidence="1">Cytoplasm</location>
    </subcellularLocation>
</comment>
<comment type="domain">
    <text evidence="1">The LID domain closes over the active site upon ATP binding.</text>
</comment>
<comment type="similarity">
    <text evidence="1">Belongs to the shikimate kinase family. AroL subfamily.</text>
</comment>
<proteinExistence type="inferred from homology"/>